<protein>
    <recommendedName>
        <fullName>Probable adenosine deaminase</fullName>
        <ecNumber>3.5.4.4</ecNumber>
    </recommendedName>
    <alternativeName>
        <fullName>Adenosine aminohydrolase</fullName>
    </alternativeName>
</protein>
<evidence type="ECO:0000250" key="1"/>
<evidence type="ECO:0000305" key="2"/>
<comment type="function">
    <text evidence="1">Catalyzes the hydrolytic deamination of adenosine. Plays an important role in purine metabolism and in adenosine homeostasis, and may thereby contribute to cellular signaling events (By similarity).</text>
</comment>
<comment type="catalytic activity">
    <reaction>
        <text>adenosine + H2O + H(+) = inosine + NH4(+)</text>
        <dbReference type="Rhea" id="RHEA:24408"/>
        <dbReference type="ChEBI" id="CHEBI:15377"/>
        <dbReference type="ChEBI" id="CHEBI:15378"/>
        <dbReference type="ChEBI" id="CHEBI:16335"/>
        <dbReference type="ChEBI" id="CHEBI:17596"/>
        <dbReference type="ChEBI" id="CHEBI:28938"/>
        <dbReference type="EC" id="3.5.4.4"/>
    </reaction>
</comment>
<comment type="cofactor">
    <cofactor evidence="1">
        <name>Zn(2+)</name>
        <dbReference type="ChEBI" id="CHEBI:29105"/>
    </cofactor>
    <text evidence="1">Binds 1 zinc ion per subunit.</text>
</comment>
<comment type="similarity">
    <text evidence="2">Belongs to the metallo-dependent hydrolases superfamily. Adenosine and AMP deaminases family.</text>
</comment>
<dbReference type="EC" id="3.5.4.4"/>
<dbReference type="EMBL" id="AAFI02000100">
    <property type="protein sequence ID" value="EAL63753.1"/>
    <property type="molecule type" value="Genomic_DNA"/>
</dbReference>
<dbReference type="RefSeq" id="XP_637270.1">
    <property type="nucleotide sequence ID" value="XM_632178.1"/>
</dbReference>
<dbReference type="SMR" id="Q54KF3"/>
<dbReference type="FunCoup" id="Q54KF3">
    <property type="interactions" value="42"/>
</dbReference>
<dbReference type="STRING" id="44689.Q54KF3"/>
<dbReference type="GlyGen" id="Q54KF3">
    <property type="glycosylation" value="1 site"/>
</dbReference>
<dbReference type="PaxDb" id="44689-DDB0230171"/>
<dbReference type="EnsemblProtists" id="EAL63753">
    <property type="protein sequence ID" value="EAL63753"/>
    <property type="gene ID" value="DDB_G0287371"/>
</dbReference>
<dbReference type="GeneID" id="8626101"/>
<dbReference type="KEGG" id="ddi:DDB_G0287371"/>
<dbReference type="dictyBase" id="DDB_G0287371">
    <property type="gene designation" value="ada"/>
</dbReference>
<dbReference type="VEuPathDB" id="AmoebaDB:DDB_G0287371"/>
<dbReference type="eggNOG" id="KOG1097">
    <property type="taxonomic scope" value="Eukaryota"/>
</dbReference>
<dbReference type="HOGENOM" id="CLU_362256_0_0_1"/>
<dbReference type="InParanoid" id="Q54KF3"/>
<dbReference type="OMA" id="FYEMCED"/>
<dbReference type="PhylomeDB" id="Q54KF3"/>
<dbReference type="Reactome" id="R-DDI-74217">
    <property type="pathway name" value="Purine salvage"/>
</dbReference>
<dbReference type="Reactome" id="R-DDI-9755088">
    <property type="pathway name" value="Ribavirin ADME"/>
</dbReference>
<dbReference type="PRO" id="PR:Q54KF3"/>
<dbReference type="Proteomes" id="UP000002195">
    <property type="component" value="Chromosome 5"/>
</dbReference>
<dbReference type="GO" id="GO:0005829">
    <property type="term" value="C:cytosol"/>
    <property type="evidence" value="ECO:0000318"/>
    <property type="project" value="GO_Central"/>
</dbReference>
<dbReference type="GO" id="GO:0009897">
    <property type="term" value="C:external side of plasma membrane"/>
    <property type="evidence" value="ECO:0000318"/>
    <property type="project" value="GO_Central"/>
</dbReference>
<dbReference type="GO" id="GO:0000034">
    <property type="term" value="F:adenine deaminase activity"/>
    <property type="evidence" value="ECO:0000250"/>
    <property type="project" value="dictyBase"/>
</dbReference>
<dbReference type="GO" id="GO:0004000">
    <property type="term" value="F:adenosine deaminase activity"/>
    <property type="evidence" value="ECO:0000318"/>
    <property type="project" value="GO_Central"/>
</dbReference>
<dbReference type="GO" id="GO:0046872">
    <property type="term" value="F:metal ion binding"/>
    <property type="evidence" value="ECO:0007669"/>
    <property type="project" value="UniProtKB-KW"/>
</dbReference>
<dbReference type="GO" id="GO:0006146">
    <property type="term" value="P:adenine catabolic process"/>
    <property type="evidence" value="ECO:0000250"/>
    <property type="project" value="dictyBase"/>
</dbReference>
<dbReference type="GO" id="GO:0006154">
    <property type="term" value="P:adenosine catabolic process"/>
    <property type="evidence" value="ECO:0000318"/>
    <property type="project" value="GO_Central"/>
</dbReference>
<dbReference type="GO" id="GO:0043103">
    <property type="term" value="P:hypoxanthine salvage"/>
    <property type="evidence" value="ECO:0000318"/>
    <property type="project" value="GO_Central"/>
</dbReference>
<dbReference type="GO" id="GO:0046103">
    <property type="term" value="P:inosine biosynthetic process"/>
    <property type="evidence" value="ECO:0000318"/>
    <property type="project" value="GO_Central"/>
</dbReference>
<dbReference type="GO" id="GO:0060169">
    <property type="term" value="P:negative regulation of adenosine receptor signaling pathway"/>
    <property type="evidence" value="ECO:0000318"/>
    <property type="project" value="GO_Central"/>
</dbReference>
<dbReference type="GO" id="GO:0009117">
    <property type="term" value="P:nucleotide metabolic process"/>
    <property type="evidence" value="ECO:0007669"/>
    <property type="project" value="UniProtKB-KW"/>
</dbReference>
<dbReference type="FunFam" id="3.20.20.140:FF:000091">
    <property type="entry name" value="Probable adenosine deaminase"/>
    <property type="match status" value="2"/>
</dbReference>
<dbReference type="Gene3D" id="3.20.20.140">
    <property type="entry name" value="Metal-dependent hydrolases"/>
    <property type="match status" value="2"/>
</dbReference>
<dbReference type="InterPro" id="IPR001365">
    <property type="entry name" value="A_deaminase_dom"/>
</dbReference>
<dbReference type="InterPro" id="IPR006330">
    <property type="entry name" value="Ado/ade_deaminase"/>
</dbReference>
<dbReference type="InterPro" id="IPR032466">
    <property type="entry name" value="Metal_Hydrolase"/>
</dbReference>
<dbReference type="NCBIfam" id="TIGR01430">
    <property type="entry name" value="aden_deam"/>
    <property type="match status" value="1"/>
</dbReference>
<dbReference type="PANTHER" id="PTHR11409">
    <property type="entry name" value="ADENOSINE DEAMINASE"/>
    <property type="match status" value="1"/>
</dbReference>
<dbReference type="PANTHER" id="PTHR11409:SF43">
    <property type="entry name" value="ADENOSINE DEAMINASE"/>
    <property type="match status" value="1"/>
</dbReference>
<dbReference type="Pfam" id="PF00962">
    <property type="entry name" value="A_deaminase"/>
    <property type="match status" value="2"/>
</dbReference>
<dbReference type="SUPFAM" id="SSF51556">
    <property type="entry name" value="Metallo-dependent hydrolases"/>
    <property type="match status" value="2"/>
</dbReference>
<organism>
    <name type="scientific">Dictyostelium discoideum</name>
    <name type="common">Social amoeba</name>
    <dbReference type="NCBI Taxonomy" id="44689"/>
    <lineage>
        <taxon>Eukaryota</taxon>
        <taxon>Amoebozoa</taxon>
        <taxon>Evosea</taxon>
        <taxon>Eumycetozoa</taxon>
        <taxon>Dictyostelia</taxon>
        <taxon>Dictyosteliales</taxon>
        <taxon>Dictyosteliaceae</taxon>
        <taxon>Dictyostelium</taxon>
    </lineage>
</organism>
<feature type="chain" id="PRO_0000350574" description="Probable adenosine deaminase">
    <location>
        <begin position="1"/>
        <end position="772"/>
    </location>
</feature>
<feature type="active site" description="Proton donor" evidence="1">
    <location>
        <position position="210"/>
    </location>
</feature>
<feature type="binding site" evidence="1">
    <location>
        <position position="22"/>
    </location>
    <ligand>
        <name>Zn(2+)</name>
        <dbReference type="ChEBI" id="CHEBI:29105"/>
        <note>catalytic</note>
    </ligand>
</feature>
<feature type="binding site" evidence="1">
    <location>
        <position position="24"/>
    </location>
    <ligand>
        <name>substrate</name>
    </ligand>
</feature>
<feature type="binding site" evidence="1">
    <location>
        <position position="24"/>
    </location>
    <ligand>
        <name>Zn(2+)</name>
        <dbReference type="ChEBI" id="CHEBI:29105"/>
        <note>catalytic</note>
    </ligand>
</feature>
<feature type="binding site" evidence="1">
    <location>
        <position position="26"/>
    </location>
    <ligand>
        <name>substrate</name>
    </ligand>
</feature>
<feature type="binding site" evidence="1">
    <location>
        <position position="180"/>
    </location>
    <ligand>
        <name>substrate</name>
    </ligand>
</feature>
<feature type="binding site" evidence="1">
    <location>
        <position position="207"/>
    </location>
    <ligand>
        <name>Zn(2+)</name>
        <dbReference type="ChEBI" id="CHEBI:29105"/>
        <note>catalytic</note>
    </ligand>
</feature>
<feature type="binding site" evidence="1">
    <location>
        <position position="288"/>
    </location>
    <ligand>
        <name>Zn(2+)</name>
        <dbReference type="ChEBI" id="CHEBI:29105"/>
        <note>catalytic</note>
    </ligand>
</feature>
<feature type="site" description="Important for catalytic activity" evidence="1">
    <location>
        <position position="231"/>
    </location>
</feature>
<proteinExistence type="inferred from homology"/>
<accession>Q54KF3</accession>
<sequence>MIENNKEITLDIIKLLPKAELHRHLDGSIRISTLLELAKEQNVELPTYDQNELAKLIHKDENCSGLVNFLEAFQYTCSVLQHAYAITRVFYEMCEDAVADGVSYLEIRFSPVLHTSFGLSLSEVMEAVCDGMAIAELNLPIKARIIVCGLRHLDPSISKDLAEITWRYRHKGAIAFDLAGPEDGFSSKHHKEAFSIIRNKGINCTLHSGEDSNWTSVADSIHHCGAHRIGHGIAIQQNEELLNHVVNRRIPIECCITSNYQIKAISNASEHPIRKYFDSGAIVSICCDNCTMSNITLSGEYKLAIDTFNFKVEEVIRLIDYSFASSFIDPPLKINIRRESFKKALKIFQTNGYDISGVIENKFYYFEEIGLDVELEIQNNLANNFSLGKNVIRNYPQITLELLENLPKSDLHCRFDGGVSIEQIWNEVQLLGIDKCEKSKQEFLKKLSSKHLACYANFKDFKEFKSLIQSSSHTPQTIRLSKEIINLLLQTPEQINRAFDDIIKVALKDKVQYLELMIRPNSHSRNGLTKEQVLALIIENKDKWEKSSSIKIGLVVFSSSTSDDPIETLDSARLAIANRNSGVIGFGIFGADPISPTESRHFSQTFSLLKENNFNLVQFAGKSDVESLISTIHCSGSTRLSGAFQSHKIPRLMSYLGNYSIPVEISLTEKLKSFTSDDLSFTTPIRHLLDGKCPVVICSFRSSLYPYSRSKMYYKIVKNAKLDFKQVVRLLKNPFAYNFQSHQQRIELVQQFNKLSKEYLNSVNINYSNIII</sequence>
<name>ADA_DICDI</name>
<reference key="1">
    <citation type="journal article" date="2005" name="Nature">
        <title>The genome of the social amoeba Dictyostelium discoideum.</title>
        <authorList>
            <person name="Eichinger L."/>
            <person name="Pachebat J.A."/>
            <person name="Gloeckner G."/>
            <person name="Rajandream M.A."/>
            <person name="Sucgang R."/>
            <person name="Berriman M."/>
            <person name="Song J."/>
            <person name="Olsen R."/>
            <person name="Szafranski K."/>
            <person name="Xu Q."/>
            <person name="Tunggal B."/>
            <person name="Kummerfeld S."/>
            <person name="Madera M."/>
            <person name="Konfortov B.A."/>
            <person name="Rivero F."/>
            <person name="Bankier A.T."/>
            <person name="Lehmann R."/>
            <person name="Hamlin N."/>
            <person name="Davies R."/>
            <person name="Gaudet P."/>
            <person name="Fey P."/>
            <person name="Pilcher K."/>
            <person name="Chen G."/>
            <person name="Saunders D."/>
            <person name="Sodergren E.J."/>
            <person name="Davis P."/>
            <person name="Kerhornou A."/>
            <person name="Nie X."/>
            <person name="Hall N."/>
            <person name="Anjard C."/>
            <person name="Hemphill L."/>
            <person name="Bason N."/>
            <person name="Farbrother P."/>
            <person name="Desany B."/>
            <person name="Just E."/>
            <person name="Morio T."/>
            <person name="Rost R."/>
            <person name="Churcher C.M."/>
            <person name="Cooper J."/>
            <person name="Haydock S."/>
            <person name="van Driessche N."/>
            <person name="Cronin A."/>
            <person name="Goodhead I."/>
            <person name="Muzny D.M."/>
            <person name="Mourier T."/>
            <person name="Pain A."/>
            <person name="Lu M."/>
            <person name="Harper D."/>
            <person name="Lindsay R."/>
            <person name="Hauser H."/>
            <person name="James K.D."/>
            <person name="Quiles M."/>
            <person name="Madan Babu M."/>
            <person name="Saito T."/>
            <person name="Buchrieser C."/>
            <person name="Wardroper A."/>
            <person name="Felder M."/>
            <person name="Thangavelu M."/>
            <person name="Johnson D."/>
            <person name="Knights A."/>
            <person name="Loulseged H."/>
            <person name="Mungall K.L."/>
            <person name="Oliver K."/>
            <person name="Price C."/>
            <person name="Quail M.A."/>
            <person name="Urushihara H."/>
            <person name="Hernandez J."/>
            <person name="Rabbinowitsch E."/>
            <person name="Steffen D."/>
            <person name="Sanders M."/>
            <person name="Ma J."/>
            <person name="Kohara Y."/>
            <person name="Sharp S."/>
            <person name="Simmonds M.N."/>
            <person name="Spiegler S."/>
            <person name="Tivey A."/>
            <person name="Sugano S."/>
            <person name="White B."/>
            <person name="Walker D."/>
            <person name="Woodward J.R."/>
            <person name="Winckler T."/>
            <person name="Tanaka Y."/>
            <person name="Shaulsky G."/>
            <person name="Schleicher M."/>
            <person name="Weinstock G.M."/>
            <person name="Rosenthal A."/>
            <person name="Cox E.C."/>
            <person name="Chisholm R.L."/>
            <person name="Gibbs R.A."/>
            <person name="Loomis W.F."/>
            <person name="Platzer M."/>
            <person name="Kay R.R."/>
            <person name="Williams J.G."/>
            <person name="Dear P.H."/>
            <person name="Noegel A.A."/>
            <person name="Barrell B.G."/>
            <person name="Kuspa A."/>
        </authorList>
    </citation>
    <scope>NUCLEOTIDE SEQUENCE [LARGE SCALE GENOMIC DNA]</scope>
    <source>
        <strain>AX4</strain>
    </source>
</reference>
<keyword id="KW-0378">Hydrolase</keyword>
<keyword id="KW-0479">Metal-binding</keyword>
<keyword id="KW-0546">Nucleotide metabolism</keyword>
<keyword id="KW-1185">Reference proteome</keyword>
<keyword id="KW-0862">Zinc</keyword>
<gene>
    <name type="primary">ada</name>
    <name type="synonym">add</name>
    <name type="ORF">DDB_G0287371</name>
</gene>